<feature type="signal peptide" evidence="1">
    <location>
        <begin position="1"/>
        <end position="19"/>
    </location>
</feature>
<feature type="propeptide" id="PRO_0000028752" description="Activation peptide" evidence="1">
    <location>
        <begin position="20"/>
        <end position="106"/>
    </location>
</feature>
<feature type="chain" id="PRO_0000028753" description="Matrix metalloproteinase-9">
    <location>
        <begin position="107"/>
        <end position="704"/>
    </location>
</feature>
<feature type="domain" description="Fibronectin type-II 1" evidence="4">
    <location>
        <begin position="225"/>
        <end position="273"/>
    </location>
</feature>
<feature type="domain" description="Fibronectin type-II 2" evidence="4">
    <location>
        <begin position="283"/>
        <end position="331"/>
    </location>
</feature>
<feature type="domain" description="Fibronectin type-II 3" evidence="4">
    <location>
        <begin position="342"/>
        <end position="390"/>
    </location>
</feature>
<feature type="repeat" description="Hemopexin 1">
    <location>
        <begin position="515"/>
        <end position="560"/>
    </location>
</feature>
<feature type="repeat" description="Hemopexin 2">
    <location>
        <begin position="561"/>
        <end position="605"/>
    </location>
</feature>
<feature type="repeat" description="Hemopexin 3">
    <location>
        <begin position="607"/>
        <end position="654"/>
    </location>
</feature>
<feature type="repeat" description="Hemopexin 4">
    <location>
        <begin position="655"/>
        <end position="701"/>
    </location>
</feature>
<feature type="region of interest" description="Disordered" evidence="6">
    <location>
        <begin position="434"/>
        <end position="507"/>
    </location>
</feature>
<feature type="short sequence motif" description="Cysteine switch" evidence="1">
    <location>
        <begin position="97"/>
        <end position="104"/>
    </location>
</feature>
<feature type="compositionally biased region" description="Pro residues" evidence="6">
    <location>
        <begin position="450"/>
        <end position="461"/>
    </location>
</feature>
<feature type="compositionally biased region" description="Pro residues" evidence="6">
    <location>
        <begin position="483"/>
        <end position="496"/>
    </location>
</feature>
<feature type="active site" evidence="5">
    <location>
        <position position="402"/>
    </location>
</feature>
<feature type="binding site" description="in inhibited form" evidence="1">
    <location>
        <position position="99"/>
    </location>
    <ligand>
        <name>Zn(2+)</name>
        <dbReference type="ChEBI" id="CHEBI:29105"/>
        <label>2</label>
        <note>catalytic</note>
    </ligand>
</feature>
<feature type="binding site" evidence="1">
    <location>
        <position position="131"/>
    </location>
    <ligand>
        <name>Ca(2+)</name>
        <dbReference type="ChEBI" id="CHEBI:29108"/>
        <label>1</label>
    </ligand>
</feature>
<feature type="binding site" evidence="1">
    <location>
        <position position="165"/>
    </location>
    <ligand>
        <name>Ca(2+)</name>
        <dbReference type="ChEBI" id="CHEBI:29108"/>
        <label>2</label>
    </ligand>
</feature>
<feature type="binding site" evidence="1">
    <location>
        <position position="175"/>
    </location>
    <ligand>
        <name>Zn(2+)</name>
        <dbReference type="ChEBI" id="CHEBI:29105"/>
        <label>1</label>
        <note>structural</note>
    </ligand>
</feature>
<feature type="binding site" evidence="1">
    <location>
        <position position="177"/>
    </location>
    <ligand>
        <name>Zn(2+)</name>
        <dbReference type="ChEBI" id="CHEBI:29105"/>
        <label>1</label>
        <note>structural</note>
    </ligand>
</feature>
<feature type="binding site" evidence="1">
    <location>
        <position position="182"/>
    </location>
    <ligand>
        <name>Ca(2+)</name>
        <dbReference type="ChEBI" id="CHEBI:29108"/>
        <label>3</label>
    </ligand>
</feature>
<feature type="binding site" evidence="1">
    <location>
        <position position="183"/>
    </location>
    <ligand>
        <name>Ca(2+)</name>
        <dbReference type="ChEBI" id="CHEBI:29108"/>
        <label>3</label>
    </ligand>
</feature>
<feature type="binding site" evidence="1">
    <location>
        <position position="185"/>
    </location>
    <ligand>
        <name>Ca(2+)</name>
        <dbReference type="ChEBI" id="CHEBI:29108"/>
        <label>3</label>
    </ligand>
</feature>
<feature type="binding site" evidence="1">
    <location>
        <position position="187"/>
    </location>
    <ligand>
        <name>Ca(2+)</name>
        <dbReference type="ChEBI" id="CHEBI:29108"/>
        <label>3</label>
    </ligand>
</feature>
<feature type="binding site" evidence="1">
    <location>
        <position position="190"/>
    </location>
    <ligand>
        <name>Zn(2+)</name>
        <dbReference type="ChEBI" id="CHEBI:29105"/>
        <label>1</label>
        <note>structural</note>
    </ligand>
</feature>
<feature type="binding site" evidence="1">
    <location>
        <position position="197"/>
    </location>
    <ligand>
        <name>Ca(2+)</name>
        <dbReference type="ChEBI" id="CHEBI:29108"/>
        <label>2</label>
    </ligand>
</feature>
<feature type="binding site" evidence="1">
    <location>
        <position position="199"/>
    </location>
    <ligand>
        <name>Ca(2+)</name>
        <dbReference type="ChEBI" id="CHEBI:29108"/>
        <label>2</label>
    </ligand>
</feature>
<feature type="binding site" evidence="1">
    <location>
        <position position="201"/>
    </location>
    <ligand>
        <name>Ca(2+)</name>
        <dbReference type="ChEBI" id="CHEBI:29108"/>
        <label>2</label>
    </ligand>
</feature>
<feature type="binding site" evidence="1">
    <location>
        <position position="203"/>
    </location>
    <ligand>
        <name>Zn(2+)</name>
        <dbReference type="ChEBI" id="CHEBI:29105"/>
        <label>1</label>
        <note>structural</note>
    </ligand>
</feature>
<feature type="binding site" evidence="1">
    <location>
        <position position="205"/>
    </location>
    <ligand>
        <name>Ca(2+)</name>
        <dbReference type="ChEBI" id="CHEBI:29108"/>
        <label>3</label>
    </ligand>
</feature>
<feature type="binding site" evidence="1">
    <location>
        <position position="206"/>
    </location>
    <ligand>
        <name>Ca(2+)</name>
        <dbReference type="ChEBI" id="CHEBI:29108"/>
        <label>1</label>
    </ligand>
</feature>
<feature type="binding site" evidence="1">
    <location>
        <position position="208"/>
    </location>
    <ligand>
        <name>Ca(2+)</name>
        <dbReference type="ChEBI" id="CHEBI:29108"/>
        <label>1</label>
    </ligand>
</feature>
<feature type="binding site" evidence="1">
    <location>
        <position position="208"/>
    </location>
    <ligand>
        <name>Ca(2+)</name>
        <dbReference type="ChEBI" id="CHEBI:29108"/>
        <label>3</label>
    </ligand>
</feature>
<feature type="binding site" evidence="1">
    <location>
        <position position="401"/>
    </location>
    <ligand>
        <name>Zn(2+)</name>
        <dbReference type="ChEBI" id="CHEBI:29105"/>
        <label>2</label>
        <note>catalytic</note>
    </ligand>
</feature>
<feature type="binding site" evidence="1">
    <location>
        <position position="405"/>
    </location>
    <ligand>
        <name>Zn(2+)</name>
        <dbReference type="ChEBI" id="CHEBI:29105"/>
        <label>2</label>
        <note>catalytic</note>
    </ligand>
</feature>
<feature type="binding site" evidence="1">
    <location>
        <position position="411"/>
    </location>
    <ligand>
        <name>Zn(2+)</name>
        <dbReference type="ChEBI" id="CHEBI:29105"/>
        <label>2</label>
        <note>catalytic</note>
    </ligand>
</feature>
<feature type="glycosylation site" description="N-linked (GlcNAc...) asparagine" evidence="3">
    <location>
        <position position="38"/>
    </location>
</feature>
<feature type="glycosylation site" description="N-linked (GlcNAc...) asparagine" evidence="3">
    <location>
        <position position="127"/>
    </location>
</feature>
<feature type="disulfide bond" evidence="4">
    <location>
        <begin position="230"/>
        <end position="256"/>
    </location>
</feature>
<feature type="disulfide bond" evidence="4">
    <location>
        <begin position="244"/>
        <end position="271"/>
    </location>
</feature>
<feature type="disulfide bond" evidence="4">
    <location>
        <begin position="288"/>
        <end position="314"/>
    </location>
</feature>
<feature type="disulfide bond" evidence="4">
    <location>
        <begin position="302"/>
        <end position="329"/>
    </location>
</feature>
<feature type="disulfide bond" evidence="4">
    <location>
        <begin position="347"/>
        <end position="373"/>
    </location>
</feature>
<feature type="disulfide bond" evidence="4">
    <location>
        <begin position="361"/>
        <end position="388"/>
    </location>
</feature>
<feature type="disulfide bond" evidence="4">
    <location>
        <begin position="513"/>
        <end position="701"/>
    </location>
</feature>
<feature type="sequence conflict" description="In Ref. 1; AAB81681." evidence="7" ref="1">
    <original>D</original>
    <variation>E</variation>
    <location>
        <position position="131"/>
    </location>
</feature>
<feature type="sequence conflict" description="In Ref. 1; AAB81681." evidence="7" ref="1">
    <original>LYA</original>
    <variation>FYT</variation>
    <location>
        <begin position="276"/>
        <end position="278"/>
    </location>
</feature>
<feature type="sequence conflict" description="In Ref. 1; AAB81681." evidence="7" ref="1">
    <original>SPS</original>
    <variation>ITD</variation>
    <location>
        <begin position="553"/>
        <end position="555"/>
    </location>
</feature>
<sequence length="704" mass="78123">MSPRQPLVLVFLVLGCCSAAPRPHKPTVVVFPGDLRTNLTDKQLAEEYLFRYGYTQVAELSNDKQSLSRGLRLLQRRLALPETGELDKTTLEAMRAPRCGVPDLGKFQTFEGDLKWHHNDITYWIQNYSEDLPRDVIDDAFARAFAVWSAVTPLTFTRVYGPEADIIIQFGVREHGDGYPFDGKNGLLAHAFPPGPGIQGDAHFDDEELWTLGKGVVVPTHFGNADGAPCHFPFTFEGRSYSACTTDGRSDDTPWCSTTADYDTDRRFGFCPSEKLYAQDGNGDGKPCVFPFTFEGRSYSTCTTDGRSDGYRWCSTTADYDQDKLYGFCPTRVDSAVTGGNSAGEPCVFPFIFLGKQYSTCTREGRGDGHLWCATTSNFDRDKKWGFCPDQGYSLFLVAAHEFGHALGLDHSSVPEALMYPMYSFTEGPPLHEDDVRGIQHLYGPRPEPEPQPPTAPPTAPPTVCATGPPTTRPSERPTAGPTGPPAAGPTGPPTAGPSEAPTVPVDPAEDICKVNIFDAIAEIRNYLHFFKEGKYWRFSKGKGRRVQGPFLSPSTWPALPRKLDSAFEDGLTKKTFFFSGRQVWVYTGTSVVGPRRLDKLGLGPEVTQVTGALPQGGGKVLLFSRQRFWSFDVKTQTVDPRSAGSVEQMYPGVPLNTHDIFQYQEKAYFCQDRFYWRVNSRNEVNQVDEVGYVTFDILQCPED</sequence>
<reference key="1">
    <citation type="journal article" date="1997" name="J. Biol. Chem.">
        <title>Dog mast cell alpha-chymase activates progelatinase B by cleaving the Phe88-Gln89 and Phe91-Glu92 bonds of the catalytic domain.</title>
        <authorList>
            <person name="Fang K.C."/>
            <person name="Raymond W.W."/>
            <person name="Blount J.L."/>
            <person name="Caughey G.H."/>
        </authorList>
    </citation>
    <scope>NUCLEOTIDE SEQUENCE [MRNA]</scope>
</reference>
<reference key="2">
    <citation type="journal article" date="2001" name="Biochim. Biophys. Acta">
        <title>High expression of 92 kDa type IV collagenase (matrix metalloproteinase-9) in canine mammary adenocarcinoma.</title>
        <authorList>
            <person name="Yokota H."/>
            <person name="Kumata T."/>
            <person name="Taketaba S."/>
            <person name="Kobayashi T."/>
            <person name="Moue H."/>
            <person name="Taniyama H."/>
            <person name="Hirayama K."/>
            <person name="Kagawa Y."/>
            <person name="Itoh N."/>
            <person name="Fujita O."/>
            <person name="Nakade T."/>
            <person name="Yuasa A."/>
        </authorList>
    </citation>
    <scope>NUCLEOTIDE SEQUENCE [MRNA]</scope>
    <source>
        <strain>Mongrel</strain>
    </source>
</reference>
<accession>O18733</accession>
<accession>O19130</accession>
<keyword id="KW-0106">Calcium</keyword>
<keyword id="KW-0177">Collagen degradation</keyword>
<keyword id="KW-1015">Disulfide bond</keyword>
<keyword id="KW-0272">Extracellular matrix</keyword>
<keyword id="KW-0325">Glycoprotein</keyword>
<keyword id="KW-0378">Hydrolase</keyword>
<keyword id="KW-0479">Metal-binding</keyword>
<keyword id="KW-0482">Metalloprotease</keyword>
<keyword id="KW-0645">Protease</keyword>
<keyword id="KW-1185">Reference proteome</keyword>
<keyword id="KW-0677">Repeat</keyword>
<keyword id="KW-0964">Secreted</keyword>
<keyword id="KW-0732">Signal</keyword>
<keyword id="KW-0862">Zinc</keyword>
<keyword id="KW-0865">Zymogen</keyword>
<name>MMP9_CANLF</name>
<proteinExistence type="evidence at transcript level"/>
<organism>
    <name type="scientific">Canis lupus familiaris</name>
    <name type="common">Dog</name>
    <name type="synonym">Canis familiaris</name>
    <dbReference type="NCBI Taxonomy" id="9615"/>
    <lineage>
        <taxon>Eukaryota</taxon>
        <taxon>Metazoa</taxon>
        <taxon>Chordata</taxon>
        <taxon>Craniata</taxon>
        <taxon>Vertebrata</taxon>
        <taxon>Euteleostomi</taxon>
        <taxon>Mammalia</taxon>
        <taxon>Eutheria</taxon>
        <taxon>Laurasiatheria</taxon>
        <taxon>Carnivora</taxon>
        <taxon>Caniformia</taxon>
        <taxon>Canidae</taxon>
        <taxon>Canis</taxon>
    </lineage>
</organism>
<gene>
    <name type="primary">MMP9</name>
</gene>
<comment type="function">
    <text evidence="1 2">Matrix metalloproteinase that plays an essential role in local proteolysis of the extracellular matrix and in leukocyte migration (By similarity). Could play a role in bone osteoclastic resorption (By similarity). Cleaves KiSS1 at a Gly-|-Leu bond (By similarity). Cleaves NINJ1 to generate the Secreted ninjurin-1 form (By similarity). Cleaves type IV and type V collagen into large C-terminal three quarter fragments and shorter N-terminal one quarter fragments. Degrades fibronectin but not laminin or Pz-peptide (By similarity).</text>
</comment>
<comment type="catalytic activity">
    <reaction evidence="1">
        <text>Cleavage of gelatin types I and V and collagen types IV and V.</text>
        <dbReference type="EC" id="3.4.24.35"/>
    </reaction>
</comment>
<comment type="cofactor">
    <cofactor evidence="1">
        <name>Zn(2+)</name>
        <dbReference type="ChEBI" id="CHEBI:29105"/>
    </cofactor>
    <text evidence="1">Binds 2 Zn(2+) ions per subunit.</text>
</comment>
<comment type="cofactor">
    <cofactor evidence="1">
        <name>Ca(2+)</name>
        <dbReference type="ChEBI" id="CHEBI:29108"/>
    </cofactor>
    <text evidence="1">Binds 3 Ca(2+) ions per subunit.</text>
</comment>
<comment type="subunit">
    <text evidence="1">Exists as monomer or homodimer; disulfide-linked. Also exists as heterodimer with LCN2. Macrophages and transformed cell lines produce only the monomeric form. Interacts with ECM1.</text>
</comment>
<comment type="subcellular location">
    <subcellularLocation>
        <location evidence="1">Secreted</location>
        <location evidence="1">Extracellular space</location>
        <location evidence="1">Extracellular matrix</location>
    </subcellularLocation>
</comment>
<comment type="domain">
    <text evidence="1">The conserved cysteine present in the cysteine-switch motif binds the catalytic zinc ion, thus inhibiting the enzyme. The dissociation of the cysteine from the zinc ion upon the activation-peptide release activates the enzyme.</text>
</comment>
<comment type="PTM">
    <text evidence="1">N- and O-glycosylated.</text>
</comment>
<comment type="similarity">
    <text evidence="7">Belongs to the peptidase M10A family.</text>
</comment>
<evidence type="ECO:0000250" key="1">
    <source>
        <dbReference type="UniProtKB" id="P14780"/>
    </source>
</evidence>
<evidence type="ECO:0000250" key="2">
    <source>
        <dbReference type="UniProtKB" id="P41245"/>
    </source>
</evidence>
<evidence type="ECO:0000255" key="3"/>
<evidence type="ECO:0000255" key="4">
    <source>
        <dbReference type="PROSITE-ProRule" id="PRU00479"/>
    </source>
</evidence>
<evidence type="ECO:0000255" key="5">
    <source>
        <dbReference type="PROSITE-ProRule" id="PRU10095"/>
    </source>
</evidence>
<evidence type="ECO:0000256" key="6">
    <source>
        <dbReference type="SAM" id="MobiDB-lite"/>
    </source>
</evidence>
<evidence type="ECO:0000305" key="7"/>
<protein>
    <recommendedName>
        <fullName>Matrix metalloproteinase-9</fullName>
        <shortName>MMP-9</shortName>
        <ecNumber evidence="1">3.4.24.35</ecNumber>
    </recommendedName>
    <alternativeName>
        <fullName>92 kDa gelatinase</fullName>
    </alternativeName>
    <alternativeName>
        <fullName>92 kDa type IV collagenase</fullName>
    </alternativeName>
    <alternativeName>
        <fullName>Gelatinase B</fullName>
        <shortName>GELB</shortName>
    </alternativeName>
</protein>
<dbReference type="EC" id="3.4.24.35" evidence="1"/>
<dbReference type="EMBL" id="AB006421">
    <property type="protein sequence ID" value="BAA22087.3"/>
    <property type="molecule type" value="mRNA"/>
</dbReference>
<dbReference type="EMBL" id="U89842">
    <property type="protein sequence ID" value="AAB81681.1"/>
    <property type="molecule type" value="mRNA"/>
</dbReference>
<dbReference type="SMR" id="O18733"/>
<dbReference type="FunCoup" id="O18733">
    <property type="interactions" value="14"/>
</dbReference>
<dbReference type="STRING" id="9615.ENSCAFP00000035167"/>
<dbReference type="MEROPS" id="M10.004"/>
<dbReference type="GlyCosmos" id="O18733">
    <property type="glycosylation" value="2 sites, No reported glycans"/>
</dbReference>
<dbReference type="PaxDb" id="9612-ENSCAFP00000035167"/>
<dbReference type="eggNOG" id="KOG1565">
    <property type="taxonomic scope" value="Eukaryota"/>
</dbReference>
<dbReference type="InParanoid" id="O18733"/>
<dbReference type="OrthoDB" id="406838at2759"/>
<dbReference type="Proteomes" id="UP000002254">
    <property type="component" value="Unplaced"/>
</dbReference>
<dbReference type="Proteomes" id="UP000694429">
    <property type="component" value="Unplaced"/>
</dbReference>
<dbReference type="Proteomes" id="UP000694542">
    <property type="component" value="Unplaced"/>
</dbReference>
<dbReference type="Proteomes" id="UP000805418">
    <property type="component" value="Unplaced"/>
</dbReference>
<dbReference type="GO" id="GO:0031012">
    <property type="term" value="C:extracellular matrix"/>
    <property type="evidence" value="ECO:0007669"/>
    <property type="project" value="InterPro"/>
</dbReference>
<dbReference type="GO" id="GO:0005615">
    <property type="term" value="C:extracellular space"/>
    <property type="evidence" value="ECO:0000250"/>
    <property type="project" value="UniProtKB"/>
</dbReference>
<dbReference type="GO" id="GO:0004222">
    <property type="term" value="F:metalloendopeptidase activity"/>
    <property type="evidence" value="ECO:0000250"/>
    <property type="project" value="UniProtKB"/>
</dbReference>
<dbReference type="GO" id="GO:0008233">
    <property type="term" value="F:peptidase activity"/>
    <property type="evidence" value="ECO:0000250"/>
    <property type="project" value="UniProtKB"/>
</dbReference>
<dbReference type="GO" id="GO:0008270">
    <property type="term" value="F:zinc ion binding"/>
    <property type="evidence" value="ECO:0007669"/>
    <property type="project" value="InterPro"/>
</dbReference>
<dbReference type="GO" id="GO:0030574">
    <property type="term" value="P:collagen catabolic process"/>
    <property type="evidence" value="ECO:0000318"/>
    <property type="project" value="GO_Central"/>
</dbReference>
<dbReference type="GO" id="GO:0030198">
    <property type="term" value="P:extracellular matrix organization"/>
    <property type="evidence" value="ECO:0000318"/>
    <property type="project" value="GO_Central"/>
</dbReference>
<dbReference type="GO" id="GO:0006508">
    <property type="term" value="P:proteolysis"/>
    <property type="evidence" value="ECO:0000250"/>
    <property type="project" value="UniProtKB"/>
</dbReference>
<dbReference type="CDD" id="cd00062">
    <property type="entry name" value="FN2"/>
    <property type="match status" value="3"/>
</dbReference>
<dbReference type="CDD" id="cd00094">
    <property type="entry name" value="HX"/>
    <property type="match status" value="1"/>
</dbReference>
<dbReference type="CDD" id="cd04278">
    <property type="entry name" value="ZnMc_MMP"/>
    <property type="match status" value="1"/>
</dbReference>
<dbReference type="FunFam" id="3.40.390.10:FF:000010">
    <property type="entry name" value="72 kDa type IV collagenase"/>
    <property type="match status" value="1"/>
</dbReference>
<dbReference type="FunFam" id="2.10.10.10:FF:000001">
    <property type="entry name" value="Fibronectin 1a isoform 1"/>
    <property type="match status" value="3"/>
</dbReference>
<dbReference type="FunFam" id="2.110.10.10:FF:000011">
    <property type="entry name" value="Matrix metalloproteinase-9"/>
    <property type="match status" value="1"/>
</dbReference>
<dbReference type="Gene3D" id="3.40.390.10">
    <property type="entry name" value="Collagenase (Catalytic Domain)"/>
    <property type="match status" value="2"/>
</dbReference>
<dbReference type="Gene3D" id="2.10.10.10">
    <property type="entry name" value="Fibronectin, type II, collagen-binding"/>
    <property type="match status" value="2"/>
</dbReference>
<dbReference type="Gene3D" id="2.110.10.10">
    <property type="entry name" value="Hemopexin-like domain"/>
    <property type="match status" value="1"/>
</dbReference>
<dbReference type="InterPro" id="IPR000562">
    <property type="entry name" value="FN_type2_dom"/>
</dbReference>
<dbReference type="InterPro" id="IPR036943">
    <property type="entry name" value="FN_type2_sf"/>
</dbReference>
<dbReference type="InterPro" id="IPR000585">
    <property type="entry name" value="Hemopexin-like_dom"/>
</dbReference>
<dbReference type="InterPro" id="IPR036375">
    <property type="entry name" value="Hemopexin-like_dom_sf"/>
</dbReference>
<dbReference type="InterPro" id="IPR018487">
    <property type="entry name" value="Hemopexin-like_repeat"/>
</dbReference>
<dbReference type="InterPro" id="IPR013806">
    <property type="entry name" value="Kringle-like"/>
</dbReference>
<dbReference type="InterPro" id="IPR033739">
    <property type="entry name" value="M10A_MMP"/>
</dbReference>
<dbReference type="InterPro" id="IPR024079">
    <property type="entry name" value="MetalloPept_cat_dom_sf"/>
</dbReference>
<dbReference type="InterPro" id="IPR001818">
    <property type="entry name" value="Pept_M10_metallopeptidase"/>
</dbReference>
<dbReference type="InterPro" id="IPR021190">
    <property type="entry name" value="Pept_M10A"/>
</dbReference>
<dbReference type="InterPro" id="IPR021158">
    <property type="entry name" value="Pept_M10A_Zn_BS"/>
</dbReference>
<dbReference type="InterPro" id="IPR006026">
    <property type="entry name" value="Peptidase_Metallo"/>
</dbReference>
<dbReference type="InterPro" id="IPR036365">
    <property type="entry name" value="PGBD-like_sf"/>
</dbReference>
<dbReference type="InterPro" id="IPR006970">
    <property type="entry name" value="PT"/>
</dbReference>
<dbReference type="PANTHER" id="PTHR10201">
    <property type="entry name" value="MATRIX METALLOPROTEINASE"/>
    <property type="match status" value="1"/>
</dbReference>
<dbReference type="PANTHER" id="PTHR10201:SF30">
    <property type="entry name" value="MATRIX METALLOPROTEINASE-9"/>
    <property type="match status" value="1"/>
</dbReference>
<dbReference type="Pfam" id="PF00040">
    <property type="entry name" value="fn2"/>
    <property type="match status" value="3"/>
</dbReference>
<dbReference type="Pfam" id="PF00045">
    <property type="entry name" value="Hemopexin"/>
    <property type="match status" value="3"/>
</dbReference>
<dbReference type="Pfam" id="PF00413">
    <property type="entry name" value="Peptidase_M10"/>
    <property type="match status" value="2"/>
</dbReference>
<dbReference type="Pfam" id="PF04886">
    <property type="entry name" value="PT"/>
    <property type="match status" value="1"/>
</dbReference>
<dbReference type="PIRSF" id="PIRSF001191">
    <property type="entry name" value="Peptidase_M10A_matrix"/>
    <property type="match status" value="1"/>
</dbReference>
<dbReference type="PRINTS" id="PR00013">
    <property type="entry name" value="FNTYPEII"/>
</dbReference>
<dbReference type="PRINTS" id="PR00138">
    <property type="entry name" value="MATRIXIN"/>
</dbReference>
<dbReference type="SMART" id="SM00059">
    <property type="entry name" value="FN2"/>
    <property type="match status" value="3"/>
</dbReference>
<dbReference type="SMART" id="SM00120">
    <property type="entry name" value="HX"/>
    <property type="match status" value="4"/>
</dbReference>
<dbReference type="SMART" id="SM00235">
    <property type="entry name" value="ZnMc"/>
    <property type="match status" value="1"/>
</dbReference>
<dbReference type="SUPFAM" id="SSF50923">
    <property type="entry name" value="Hemopexin-like domain"/>
    <property type="match status" value="1"/>
</dbReference>
<dbReference type="SUPFAM" id="SSF57440">
    <property type="entry name" value="Kringle-like"/>
    <property type="match status" value="3"/>
</dbReference>
<dbReference type="SUPFAM" id="SSF55486">
    <property type="entry name" value="Metalloproteases ('zincins'), catalytic domain"/>
    <property type="match status" value="1"/>
</dbReference>
<dbReference type="SUPFAM" id="SSF47090">
    <property type="entry name" value="PGBD-like"/>
    <property type="match status" value="1"/>
</dbReference>
<dbReference type="PROSITE" id="PS00546">
    <property type="entry name" value="CYSTEINE_SWITCH"/>
    <property type="match status" value="1"/>
</dbReference>
<dbReference type="PROSITE" id="PS00023">
    <property type="entry name" value="FN2_1"/>
    <property type="match status" value="3"/>
</dbReference>
<dbReference type="PROSITE" id="PS51092">
    <property type="entry name" value="FN2_2"/>
    <property type="match status" value="3"/>
</dbReference>
<dbReference type="PROSITE" id="PS51642">
    <property type="entry name" value="HEMOPEXIN_2"/>
    <property type="match status" value="4"/>
</dbReference>
<dbReference type="PROSITE" id="PS00142">
    <property type="entry name" value="ZINC_PROTEASE"/>
    <property type="match status" value="1"/>
</dbReference>